<gene>
    <name type="primary">LURAP1L</name>
    <name type="synonym">C9orf150</name>
    <name type="ORF">HYST0841</name>
</gene>
<organism>
    <name type="scientific">Homo sapiens</name>
    <name type="common">Human</name>
    <dbReference type="NCBI Taxonomy" id="9606"/>
    <lineage>
        <taxon>Eukaryota</taxon>
        <taxon>Metazoa</taxon>
        <taxon>Chordata</taxon>
        <taxon>Craniata</taxon>
        <taxon>Vertebrata</taxon>
        <taxon>Euteleostomi</taxon>
        <taxon>Mammalia</taxon>
        <taxon>Eutheria</taxon>
        <taxon>Euarchontoglires</taxon>
        <taxon>Primates</taxon>
        <taxon>Haplorrhini</taxon>
        <taxon>Catarrhini</taxon>
        <taxon>Hominidae</taxon>
        <taxon>Homo</taxon>
    </lineage>
</organism>
<name>LUR1L_HUMAN</name>
<reference key="1">
    <citation type="journal article" date="2004" name="Oncogene">
        <title>Expression profiling and differential screening between hepatoblastomas and the corresponding normal livers: identification of high expression of the PLK1 oncogene as a poor-prognostic indicator of hepatoblastomas.</title>
        <authorList>
            <person name="Yamada S."/>
            <person name="Ohira M."/>
            <person name="Horie H."/>
            <person name="Ando K."/>
            <person name="Takayasu H."/>
            <person name="Suzuki Y."/>
            <person name="Sugano S."/>
            <person name="Hirata T."/>
            <person name="Goto T."/>
            <person name="Matsunaga T."/>
            <person name="Hiyama E."/>
            <person name="Hayashi Y."/>
            <person name="Ando H."/>
            <person name="Suita S."/>
            <person name="Kaneko M."/>
            <person name="Sasaki F."/>
            <person name="Hashizume K."/>
            <person name="Ohnuma N."/>
            <person name="Nakagawara A."/>
        </authorList>
    </citation>
    <scope>NUCLEOTIDE SEQUENCE [LARGE SCALE MRNA]</scope>
    <scope>VARIANTS GLY-GLY-GLY-55 INS AND GLY-59</scope>
    <source>
        <tissue>Hepatoblastoma</tissue>
    </source>
</reference>
<reference key="2">
    <citation type="journal article" date="2004" name="Nat. Genet.">
        <title>Complete sequencing and characterization of 21,243 full-length human cDNAs.</title>
        <authorList>
            <person name="Ota T."/>
            <person name="Suzuki Y."/>
            <person name="Nishikawa T."/>
            <person name="Otsuki T."/>
            <person name="Sugiyama T."/>
            <person name="Irie R."/>
            <person name="Wakamatsu A."/>
            <person name="Hayashi K."/>
            <person name="Sato H."/>
            <person name="Nagai K."/>
            <person name="Kimura K."/>
            <person name="Makita H."/>
            <person name="Sekine M."/>
            <person name="Obayashi M."/>
            <person name="Nishi T."/>
            <person name="Shibahara T."/>
            <person name="Tanaka T."/>
            <person name="Ishii S."/>
            <person name="Yamamoto J."/>
            <person name="Saito K."/>
            <person name="Kawai Y."/>
            <person name="Isono Y."/>
            <person name="Nakamura Y."/>
            <person name="Nagahari K."/>
            <person name="Murakami K."/>
            <person name="Yasuda T."/>
            <person name="Iwayanagi T."/>
            <person name="Wagatsuma M."/>
            <person name="Shiratori A."/>
            <person name="Sudo H."/>
            <person name="Hosoiri T."/>
            <person name="Kaku Y."/>
            <person name="Kodaira H."/>
            <person name="Kondo H."/>
            <person name="Sugawara M."/>
            <person name="Takahashi M."/>
            <person name="Kanda K."/>
            <person name="Yokoi T."/>
            <person name="Furuya T."/>
            <person name="Kikkawa E."/>
            <person name="Omura Y."/>
            <person name="Abe K."/>
            <person name="Kamihara K."/>
            <person name="Katsuta N."/>
            <person name="Sato K."/>
            <person name="Tanikawa M."/>
            <person name="Yamazaki M."/>
            <person name="Ninomiya K."/>
            <person name="Ishibashi T."/>
            <person name="Yamashita H."/>
            <person name="Murakawa K."/>
            <person name="Fujimori K."/>
            <person name="Tanai H."/>
            <person name="Kimata M."/>
            <person name="Watanabe M."/>
            <person name="Hiraoka S."/>
            <person name="Chiba Y."/>
            <person name="Ishida S."/>
            <person name="Ono Y."/>
            <person name="Takiguchi S."/>
            <person name="Watanabe S."/>
            <person name="Yosida M."/>
            <person name="Hotuta T."/>
            <person name="Kusano J."/>
            <person name="Kanehori K."/>
            <person name="Takahashi-Fujii A."/>
            <person name="Hara H."/>
            <person name="Tanase T.-O."/>
            <person name="Nomura Y."/>
            <person name="Togiya S."/>
            <person name="Komai F."/>
            <person name="Hara R."/>
            <person name="Takeuchi K."/>
            <person name="Arita M."/>
            <person name="Imose N."/>
            <person name="Musashino K."/>
            <person name="Yuuki H."/>
            <person name="Oshima A."/>
            <person name="Sasaki N."/>
            <person name="Aotsuka S."/>
            <person name="Yoshikawa Y."/>
            <person name="Matsunawa H."/>
            <person name="Ichihara T."/>
            <person name="Shiohata N."/>
            <person name="Sano S."/>
            <person name="Moriya S."/>
            <person name="Momiyama H."/>
            <person name="Satoh N."/>
            <person name="Takami S."/>
            <person name="Terashima Y."/>
            <person name="Suzuki O."/>
            <person name="Nakagawa S."/>
            <person name="Senoh A."/>
            <person name="Mizoguchi H."/>
            <person name="Goto Y."/>
            <person name="Shimizu F."/>
            <person name="Wakebe H."/>
            <person name="Hishigaki H."/>
            <person name="Watanabe T."/>
            <person name="Sugiyama A."/>
            <person name="Takemoto M."/>
            <person name="Kawakami B."/>
            <person name="Yamazaki M."/>
            <person name="Watanabe K."/>
            <person name="Kumagai A."/>
            <person name="Itakura S."/>
            <person name="Fukuzumi Y."/>
            <person name="Fujimori Y."/>
            <person name="Komiyama M."/>
            <person name="Tashiro H."/>
            <person name="Tanigami A."/>
            <person name="Fujiwara T."/>
            <person name="Ono T."/>
            <person name="Yamada K."/>
            <person name="Fujii Y."/>
            <person name="Ozaki K."/>
            <person name="Hirao M."/>
            <person name="Ohmori Y."/>
            <person name="Kawabata A."/>
            <person name="Hikiji T."/>
            <person name="Kobatake N."/>
            <person name="Inagaki H."/>
            <person name="Ikema Y."/>
            <person name="Okamoto S."/>
            <person name="Okitani R."/>
            <person name="Kawakami T."/>
            <person name="Noguchi S."/>
            <person name="Itoh T."/>
            <person name="Shigeta K."/>
            <person name="Senba T."/>
            <person name="Matsumura K."/>
            <person name="Nakajima Y."/>
            <person name="Mizuno T."/>
            <person name="Morinaga M."/>
            <person name="Sasaki M."/>
            <person name="Togashi T."/>
            <person name="Oyama M."/>
            <person name="Hata H."/>
            <person name="Watanabe M."/>
            <person name="Komatsu T."/>
            <person name="Mizushima-Sugano J."/>
            <person name="Satoh T."/>
            <person name="Shirai Y."/>
            <person name="Takahashi Y."/>
            <person name="Nakagawa K."/>
            <person name="Okumura K."/>
            <person name="Nagase T."/>
            <person name="Nomura N."/>
            <person name="Kikuchi H."/>
            <person name="Masuho Y."/>
            <person name="Yamashita R."/>
            <person name="Nakai K."/>
            <person name="Yada T."/>
            <person name="Nakamura Y."/>
            <person name="Ohara O."/>
            <person name="Isogai T."/>
            <person name="Sugano S."/>
        </authorList>
    </citation>
    <scope>NUCLEOTIDE SEQUENCE [LARGE SCALE MRNA]</scope>
    <scope>VARIANTS GLY-GLY-GLY-55 INS AND GLY-59</scope>
    <source>
        <tissue>Chondrocyte</tissue>
        <tissue>Teratocarcinoma</tissue>
    </source>
</reference>
<reference key="3">
    <citation type="journal article" date="2004" name="Nature">
        <title>DNA sequence and analysis of human chromosome 9.</title>
        <authorList>
            <person name="Humphray S.J."/>
            <person name="Oliver K."/>
            <person name="Hunt A.R."/>
            <person name="Plumb R.W."/>
            <person name="Loveland J.E."/>
            <person name="Howe K.L."/>
            <person name="Andrews T.D."/>
            <person name="Searle S."/>
            <person name="Hunt S.E."/>
            <person name="Scott C.E."/>
            <person name="Jones M.C."/>
            <person name="Ainscough R."/>
            <person name="Almeida J.P."/>
            <person name="Ambrose K.D."/>
            <person name="Ashwell R.I.S."/>
            <person name="Babbage A.K."/>
            <person name="Babbage S."/>
            <person name="Bagguley C.L."/>
            <person name="Bailey J."/>
            <person name="Banerjee R."/>
            <person name="Barker D.J."/>
            <person name="Barlow K.F."/>
            <person name="Bates K."/>
            <person name="Beasley H."/>
            <person name="Beasley O."/>
            <person name="Bird C.P."/>
            <person name="Bray-Allen S."/>
            <person name="Brown A.J."/>
            <person name="Brown J.Y."/>
            <person name="Burford D."/>
            <person name="Burrill W."/>
            <person name="Burton J."/>
            <person name="Carder C."/>
            <person name="Carter N.P."/>
            <person name="Chapman J.C."/>
            <person name="Chen Y."/>
            <person name="Clarke G."/>
            <person name="Clark S.Y."/>
            <person name="Clee C.M."/>
            <person name="Clegg S."/>
            <person name="Collier R.E."/>
            <person name="Corby N."/>
            <person name="Crosier M."/>
            <person name="Cummings A.T."/>
            <person name="Davies J."/>
            <person name="Dhami P."/>
            <person name="Dunn M."/>
            <person name="Dutta I."/>
            <person name="Dyer L.W."/>
            <person name="Earthrowl M.E."/>
            <person name="Faulkner L."/>
            <person name="Fleming C.J."/>
            <person name="Frankish A."/>
            <person name="Frankland J.A."/>
            <person name="French L."/>
            <person name="Fricker D.G."/>
            <person name="Garner P."/>
            <person name="Garnett J."/>
            <person name="Ghori J."/>
            <person name="Gilbert J.G.R."/>
            <person name="Glison C."/>
            <person name="Grafham D.V."/>
            <person name="Gribble S."/>
            <person name="Griffiths C."/>
            <person name="Griffiths-Jones S."/>
            <person name="Grocock R."/>
            <person name="Guy J."/>
            <person name="Hall R.E."/>
            <person name="Hammond S."/>
            <person name="Harley J.L."/>
            <person name="Harrison E.S.I."/>
            <person name="Hart E.A."/>
            <person name="Heath P.D."/>
            <person name="Henderson C.D."/>
            <person name="Hopkins B.L."/>
            <person name="Howard P.J."/>
            <person name="Howden P.J."/>
            <person name="Huckle E."/>
            <person name="Johnson C."/>
            <person name="Johnson D."/>
            <person name="Joy A.A."/>
            <person name="Kay M."/>
            <person name="Keenan S."/>
            <person name="Kershaw J.K."/>
            <person name="Kimberley A.M."/>
            <person name="King A."/>
            <person name="Knights A."/>
            <person name="Laird G.K."/>
            <person name="Langford C."/>
            <person name="Lawlor S."/>
            <person name="Leongamornlert D.A."/>
            <person name="Leversha M."/>
            <person name="Lloyd C."/>
            <person name="Lloyd D.M."/>
            <person name="Lovell J."/>
            <person name="Martin S."/>
            <person name="Mashreghi-Mohammadi M."/>
            <person name="Matthews L."/>
            <person name="McLaren S."/>
            <person name="McLay K.E."/>
            <person name="McMurray A."/>
            <person name="Milne S."/>
            <person name="Nickerson T."/>
            <person name="Nisbett J."/>
            <person name="Nordsiek G."/>
            <person name="Pearce A.V."/>
            <person name="Peck A.I."/>
            <person name="Porter K.M."/>
            <person name="Pandian R."/>
            <person name="Pelan S."/>
            <person name="Phillimore B."/>
            <person name="Povey S."/>
            <person name="Ramsey Y."/>
            <person name="Rand V."/>
            <person name="Scharfe M."/>
            <person name="Sehra H.K."/>
            <person name="Shownkeen R."/>
            <person name="Sims S.K."/>
            <person name="Skuce C.D."/>
            <person name="Smith M."/>
            <person name="Steward C.A."/>
            <person name="Swarbreck D."/>
            <person name="Sycamore N."/>
            <person name="Tester J."/>
            <person name="Thorpe A."/>
            <person name="Tracey A."/>
            <person name="Tromans A."/>
            <person name="Thomas D.W."/>
            <person name="Wall M."/>
            <person name="Wallis J.M."/>
            <person name="West A.P."/>
            <person name="Whitehead S.L."/>
            <person name="Willey D.L."/>
            <person name="Williams S.A."/>
            <person name="Wilming L."/>
            <person name="Wray P.W."/>
            <person name="Young L."/>
            <person name="Ashurst J.L."/>
            <person name="Coulson A."/>
            <person name="Blocker H."/>
            <person name="Durbin R.M."/>
            <person name="Sulston J.E."/>
            <person name="Hubbard T."/>
            <person name="Jackson M.J."/>
            <person name="Bentley D.R."/>
            <person name="Beck S."/>
            <person name="Rogers J."/>
            <person name="Dunham I."/>
        </authorList>
    </citation>
    <scope>NUCLEOTIDE SEQUENCE [LARGE SCALE GENOMIC DNA]</scope>
</reference>
<reference key="4">
    <citation type="journal article" date="2004" name="Genome Res.">
        <title>The status, quality, and expansion of the NIH full-length cDNA project: the Mammalian Gene Collection (MGC).</title>
        <authorList>
            <consortium name="The MGC Project Team"/>
        </authorList>
    </citation>
    <scope>NUCLEOTIDE SEQUENCE [LARGE SCALE MRNA]</scope>
    <scope>VARIANTS GLY-GLY-GLY-55 INS AND GLY-59</scope>
    <source>
        <tissue>Pancreas</tissue>
        <tissue>Spleen</tissue>
    </source>
</reference>
<reference key="5">
    <citation type="journal article" date="2012" name="Proc. Natl. Acad. Sci. U.S.A.">
        <title>N-terminal acetylome analyses and functional insights of the N-terminal acetyltransferase NatB.</title>
        <authorList>
            <person name="Van Damme P."/>
            <person name="Lasa M."/>
            <person name="Polevoda B."/>
            <person name="Gazquez C."/>
            <person name="Elosegui-Artola A."/>
            <person name="Kim D.S."/>
            <person name="De Juan-Pardo E."/>
            <person name="Demeyer K."/>
            <person name="Hole K."/>
            <person name="Larrea E."/>
            <person name="Timmerman E."/>
            <person name="Prieto J."/>
            <person name="Arnesen T."/>
            <person name="Sherman F."/>
            <person name="Gevaert K."/>
            <person name="Aldabe R."/>
        </authorList>
    </citation>
    <scope>ACETYLATION [LARGE SCALE ANALYSIS] AT MET-1</scope>
    <scope>IDENTIFICATION BY MASS SPECTROMETRY [LARGE SCALE ANALYSIS]</scope>
</reference>
<keyword id="KW-0007">Acetylation</keyword>
<keyword id="KW-1267">Proteomics identification</keyword>
<keyword id="KW-1185">Reference proteome</keyword>
<feature type="chain" id="PRO_0000089740" description="Leucine rich adaptor protein 1-like">
    <location>
        <begin position="1"/>
        <end position="228"/>
    </location>
</feature>
<feature type="region of interest" description="Disordered" evidence="1">
    <location>
        <begin position="1"/>
        <end position="89"/>
    </location>
</feature>
<feature type="compositionally biased region" description="Basic and acidic residues" evidence="1">
    <location>
        <begin position="8"/>
        <end position="21"/>
    </location>
</feature>
<feature type="compositionally biased region" description="Basic and acidic residues" evidence="1">
    <location>
        <begin position="28"/>
        <end position="42"/>
    </location>
</feature>
<feature type="compositionally biased region" description="Gly residues" evidence="1">
    <location>
        <begin position="44"/>
        <end position="56"/>
    </location>
</feature>
<feature type="compositionally biased region" description="Low complexity" evidence="1">
    <location>
        <begin position="57"/>
        <end position="88"/>
    </location>
</feature>
<feature type="modified residue" description="N-acetylmethionine" evidence="6">
    <location>
        <position position="1"/>
    </location>
</feature>
<feature type="sequence variant" id="VAR_028154" description="In dbSNP:rs199677889.">
    <location>
        <begin position="47"/>
        <end position="49"/>
    </location>
</feature>
<feature type="sequence variant" id="VAR_085725" evidence="2 3 4">
    <original>G</original>
    <variation>GGGG</variation>
    <location>
        <position position="55"/>
    </location>
</feature>
<feature type="sequence variant" id="VAR_028155" description="In dbSNP:rs3750501." evidence="2 3 4">
    <original>S</original>
    <variation>G</variation>
    <location>
        <position position="59"/>
    </location>
</feature>
<feature type="sequence conflict" description="In Ref. 2; BAC04633." evidence="5" ref="2">
    <original>D</original>
    <variation>G</variation>
    <location>
        <position position="39"/>
    </location>
</feature>
<feature type="sequence conflict" description="In Ref. 2; AK074752." evidence="5" ref="2">
    <original>G</original>
    <variation>S</variation>
    <location>
        <position position="147"/>
    </location>
</feature>
<protein>
    <recommendedName>
        <fullName>Leucine rich adaptor protein 1-like</fullName>
    </recommendedName>
</protein>
<evidence type="ECO:0000256" key="1">
    <source>
        <dbReference type="SAM" id="MobiDB-lite"/>
    </source>
</evidence>
<evidence type="ECO:0000269" key="2">
    <source>
    </source>
</evidence>
<evidence type="ECO:0000269" key="3">
    <source>
    </source>
</evidence>
<evidence type="ECO:0000269" key="4">
    <source>
    </source>
</evidence>
<evidence type="ECO:0000305" key="5"/>
<evidence type="ECO:0007744" key="6">
    <source>
    </source>
</evidence>
<proteinExistence type="evidence at protein level"/>
<dbReference type="EMBL" id="AB073606">
    <property type="protein sequence ID" value="BAD38643.1"/>
    <property type="molecule type" value="mRNA"/>
</dbReference>
<dbReference type="EMBL" id="AK074752">
    <property type="status" value="NOT_ANNOTATED_CDS"/>
    <property type="molecule type" value="mRNA"/>
</dbReference>
<dbReference type="EMBL" id="AK095824">
    <property type="protein sequence ID" value="BAC04633.1"/>
    <property type="molecule type" value="mRNA"/>
</dbReference>
<dbReference type="EMBL" id="AL157828">
    <property type="status" value="NOT_ANNOTATED_CDS"/>
    <property type="molecule type" value="Genomic_DNA"/>
</dbReference>
<dbReference type="EMBL" id="AL138753">
    <property type="status" value="NOT_ANNOTATED_CDS"/>
    <property type="molecule type" value="Genomic_DNA"/>
</dbReference>
<dbReference type="EMBL" id="BC036923">
    <property type="protein sequence ID" value="AAH36923.1"/>
    <property type="molecule type" value="mRNA"/>
</dbReference>
<dbReference type="CCDS" id="CCDS6473.1"/>
<dbReference type="RefSeq" id="NP_981948.1">
    <property type="nucleotide sequence ID" value="NM_203403.2"/>
</dbReference>
<dbReference type="SMR" id="Q8IV03"/>
<dbReference type="BioGRID" id="130356">
    <property type="interactions" value="23"/>
</dbReference>
<dbReference type="FunCoup" id="Q8IV03">
    <property type="interactions" value="61"/>
</dbReference>
<dbReference type="IntAct" id="Q8IV03">
    <property type="interactions" value="20"/>
</dbReference>
<dbReference type="MINT" id="Q8IV03"/>
<dbReference type="STRING" id="9606.ENSP00000321026"/>
<dbReference type="iPTMnet" id="Q8IV03"/>
<dbReference type="PhosphoSitePlus" id="Q8IV03"/>
<dbReference type="BioMuta" id="LURAP1L"/>
<dbReference type="DMDM" id="116241298"/>
<dbReference type="jPOST" id="Q8IV03"/>
<dbReference type="MassIVE" id="Q8IV03"/>
<dbReference type="PaxDb" id="9606-ENSP00000321026"/>
<dbReference type="PeptideAtlas" id="Q8IV03"/>
<dbReference type="ProteomicsDB" id="70637"/>
<dbReference type="Antibodypedia" id="24398">
    <property type="antibodies" value="84 antibodies from 15 providers"/>
</dbReference>
<dbReference type="DNASU" id="286343"/>
<dbReference type="Ensembl" id="ENST00000319264.4">
    <property type="protein sequence ID" value="ENSP00000321026.3"/>
    <property type="gene ID" value="ENSG00000153714.6"/>
</dbReference>
<dbReference type="GeneID" id="286343"/>
<dbReference type="KEGG" id="hsa:286343"/>
<dbReference type="MANE-Select" id="ENST00000319264.4">
    <property type="protein sequence ID" value="ENSP00000321026.3"/>
    <property type="RefSeq nucleotide sequence ID" value="NM_203403.2"/>
    <property type="RefSeq protein sequence ID" value="NP_981948.1"/>
</dbReference>
<dbReference type="UCSC" id="uc003zkw.4">
    <property type="organism name" value="human"/>
</dbReference>
<dbReference type="AGR" id="HGNC:31452"/>
<dbReference type="CTD" id="286343"/>
<dbReference type="DisGeNET" id="286343"/>
<dbReference type="GeneCards" id="LURAP1L"/>
<dbReference type="HGNC" id="HGNC:31452">
    <property type="gene designation" value="LURAP1L"/>
</dbReference>
<dbReference type="HPA" id="ENSG00000153714">
    <property type="expression patterns" value="Low tissue specificity"/>
</dbReference>
<dbReference type="MIM" id="616130">
    <property type="type" value="gene"/>
</dbReference>
<dbReference type="neXtProt" id="NX_Q8IV03"/>
<dbReference type="OpenTargets" id="ENSG00000153714"/>
<dbReference type="PharmGKB" id="PA134938789"/>
<dbReference type="VEuPathDB" id="HostDB:ENSG00000153714"/>
<dbReference type="eggNOG" id="ENOG502QU2C">
    <property type="taxonomic scope" value="Eukaryota"/>
</dbReference>
<dbReference type="GeneTree" id="ENSGT00530000063790"/>
<dbReference type="HOGENOM" id="CLU_106332_1_0_1"/>
<dbReference type="InParanoid" id="Q8IV03"/>
<dbReference type="OMA" id="QPLHKHP"/>
<dbReference type="OrthoDB" id="6508726at2759"/>
<dbReference type="PAN-GO" id="Q8IV03">
    <property type="GO annotations" value="1 GO annotation based on evolutionary models"/>
</dbReference>
<dbReference type="PhylomeDB" id="Q8IV03"/>
<dbReference type="TreeFam" id="TF332089"/>
<dbReference type="PathwayCommons" id="Q8IV03"/>
<dbReference type="SignaLink" id="Q8IV03"/>
<dbReference type="BioGRID-ORCS" id="286343">
    <property type="hits" value="121 hits in 1137 CRISPR screens"/>
</dbReference>
<dbReference type="ChiTaRS" id="LURAP1L">
    <property type="organism name" value="human"/>
</dbReference>
<dbReference type="GenomeRNAi" id="286343"/>
<dbReference type="Pharos" id="Q8IV03">
    <property type="development level" value="Tdark"/>
</dbReference>
<dbReference type="PRO" id="PR:Q8IV03"/>
<dbReference type="Proteomes" id="UP000005640">
    <property type="component" value="Chromosome 9"/>
</dbReference>
<dbReference type="RNAct" id="Q8IV03">
    <property type="molecule type" value="protein"/>
</dbReference>
<dbReference type="Bgee" id="ENSG00000153714">
    <property type="expression patterns" value="Expressed in islet of Langerhans and 154 other cell types or tissues"/>
</dbReference>
<dbReference type="GO" id="GO:0043123">
    <property type="term" value="P:positive regulation of canonical NF-kappaB signal transduction"/>
    <property type="evidence" value="ECO:0007669"/>
    <property type="project" value="InterPro"/>
</dbReference>
<dbReference type="InterPro" id="IPR039499">
    <property type="entry name" value="LURA1/LRA25"/>
</dbReference>
<dbReference type="InterPro" id="IPR037443">
    <property type="entry name" value="LURAP1"/>
</dbReference>
<dbReference type="PANTHER" id="PTHR33767">
    <property type="entry name" value="LEUCINE RICH ADAPTOR PROTEIN 1-LIKE"/>
    <property type="match status" value="1"/>
</dbReference>
<dbReference type="PANTHER" id="PTHR33767:SF1">
    <property type="entry name" value="LEUCINE RICH ADAPTOR PROTEIN 1-LIKE"/>
    <property type="match status" value="1"/>
</dbReference>
<dbReference type="Pfam" id="PF14854">
    <property type="entry name" value="LURAP"/>
    <property type="match status" value="1"/>
</dbReference>
<comment type="interaction">
    <interactant intactId="EBI-12898559">
        <id>Q8IV03</id>
    </interactant>
    <interactant intactId="EBI-1166928">
        <id>Q8N5M1</id>
        <label>ATPAF2</label>
    </interactant>
    <organismsDiffer>false</organismsDiffer>
    <experiments>3</experiments>
</comment>
<comment type="interaction">
    <interactant intactId="EBI-12898559">
        <id>Q8IV03</id>
    </interactant>
    <interactant intactId="EBI-719941">
        <id>Q3B820</id>
        <label>FAM161A</label>
    </interactant>
    <organismsDiffer>false</organismsDiffer>
    <experiments>3</experiments>
</comment>
<comment type="interaction">
    <interactant intactId="EBI-12898559">
        <id>Q8IV03</id>
    </interactant>
    <interactant intactId="EBI-11022007">
        <id>Q9HBE1-4</id>
        <label>PATZ1</label>
    </interactant>
    <organismsDiffer>false</organismsDiffer>
    <experiments>3</experiments>
</comment>
<comment type="interaction">
    <interactant intactId="EBI-12898559">
        <id>Q8IV03</id>
    </interactant>
    <interactant intactId="EBI-752074">
        <id>P41219</id>
        <label>PRPH</label>
    </interactant>
    <organismsDiffer>false</organismsDiffer>
    <experiments>3</experiments>
</comment>
<comment type="interaction">
    <interactant intactId="EBI-12898559">
        <id>Q8IV03</id>
    </interactant>
    <interactant intactId="EBI-727004">
        <id>O00560</id>
        <label>SDCBP</label>
    </interactant>
    <organismsDiffer>false</organismsDiffer>
    <experiments>3</experiments>
</comment>
<comment type="interaction">
    <interactant intactId="EBI-12898559">
        <id>Q8IV03</id>
    </interactant>
    <interactant intactId="EBI-7818932">
        <id>Q9NVR7</id>
        <label>TBCCD1</label>
    </interactant>
    <organismsDiffer>false</organismsDiffer>
    <experiments>3</experiments>
</comment>
<comment type="polymorphism">
    <text>The poly-Gly region is polymorphic and the number of Gly varies in the population (from 9 to 12).</text>
</comment>
<comment type="sequence caution" evidence="5">
    <conflict type="frameshift">
        <sequence resource="EMBL" id="AK074752"/>
    </conflict>
</comment>
<sequence length="228" mass="24412">MEDSPLPDLRDIELKLGRKVPESLVRSLRGEEPVPRERDRDPCGGSGGGGGGGGGCSSSSSYCSFPPSLSSSSSSSPTSGSPRGSHSSALERLETKLHLLRQEMVNLRATDVRLMRQLLVINESIESIKWMIEEKATITSRGSSLSGSLCSLLESQSTSLRGSYNSLHDGSDGLDGISVGSYLDTLADDVPGHQTPSDLDQFSDSSLIEDSQALHKRPKLDSEYYCFG</sequence>
<accession>Q8IV03</accession>
<accession>Q5VZX7</accession>
<accession>Q8N923</accession>
<accession>Q8NCG2</accession>